<comment type="function">
    <text evidence="2">May catalyze the decarboxylation of L-aspartate, 3-sulfino-L-alanine (cysteine sulfinic acid), and L-cysteate to beta-alanine, hypotaurine and taurine, respectively. Does not exhibit any decarboxylation activity toward glutamate.</text>
</comment>
<comment type="catalytic activity">
    <reaction evidence="2">
        <text>L-aspartate + H(+) = beta-alanine + CO2</text>
        <dbReference type="Rhea" id="RHEA:19497"/>
        <dbReference type="ChEBI" id="CHEBI:15378"/>
        <dbReference type="ChEBI" id="CHEBI:16526"/>
        <dbReference type="ChEBI" id="CHEBI:29991"/>
        <dbReference type="ChEBI" id="CHEBI:57966"/>
        <dbReference type="EC" id="4.1.1.11"/>
    </reaction>
</comment>
<comment type="catalytic activity">
    <reaction evidence="2">
        <text>3-sulfino-L-alanine + H(+) = hypotaurine + CO2</text>
        <dbReference type="Rhea" id="RHEA:16877"/>
        <dbReference type="ChEBI" id="CHEBI:15378"/>
        <dbReference type="ChEBI" id="CHEBI:16526"/>
        <dbReference type="ChEBI" id="CHEBI:57853"/>
        <dbReference type="ChEBI" id="CHEBI:61085"/>
        <dbReference type="EC" id="4.1.1.29"/>
    </reaction>
</comment>
<comment type="catalytic activity">
    <reaction evidence="1">
        <text>L-cysteate + H(+) = taurine + CO2</text>
        <dbReference type="Rhea" id="RHEA:25221"/>
        <dbReference type="ChEBI" id="CHEBI:15378"/>
        <dbReference type="ChEBI" id="CHEBI:16526"/>
        <dbReference type="ChEBI" id="CHEBI:58090"/>
        <dbReference type="ChEBI" id="CHEBI:507393"/>
        <dbReference type="EC" id="4.1.1.29"/>
    </reaction>
</comment>
<comment type="cofactor">
    <cofactor evidence="2">
        <name>pyridoxal 5'-phosphate</name>
        <dbReference type="ChEBI" id="CHEBI:597326"/>
    </cofactor>
</comment>
<comment type="biophysicochemical properties">
    <kinetics>
        <KM evidence="2">2.72 mM for L-aspartate</KM>
        <KM evidence="2">1.14 mM for 3-sulfino-L-alanine (cysteine sulfinic acid)</KM>
        <Vmax evidence="2">1.56 umol/min/mg enzyme toward L-aspartate</Vmax>
        <Vmax evidence="2">2.31 umol/min/mg enzyme toward 3-sulfino-L-alanine (cysteine sulfinic acid)</Vmax>
    </kinetics>
</comment>
<comment type="subunit">
    <text evidence="1">Homodimer.</text>
</comment>
<comment type="alternative products">
    <event type="alternative splicing"/>
    <isoform>
        <id>Q6ZQY3-1</id>
        <name>1</name>
        <sequence type="displayed"/>
    </isoform>
    <isoform>
        <id>Q6ZQY3-3</id>
        <name>2</name>
        <sequence type="described" ref="VSP_036227"/>
    </isoform>
</comment>
<comment type="tissue specificity">
    <text evidence="3">Expressed very weakly in neurons and not detected in astrocytes, brain or liver.</text>
</comment>
<comment type="similarity">
    <text evidence="5">Belongs to the group II decarboxylase family.</text>
</comment>
<comment type="sequence caution" evidence="5">
    <conflict type="erroneous initiation">
        <sequence resource="EMBL-CDS" id="AAH93701"/>
    </conflict>
    <text>Truncated N-terminus.</text>
</comment>
<comment type="sequence caution" evidence="5">
    <conflict type="erroneous initiation">
        <sequence resource="EMBL-CDS" id="AAI11987"/>
    </conflict>
    <text>Truncated N-terminus.</text>
</comment>
<comment type="sequence caution" evidence="5">
    <conflict type="erroneous initiation">
        <sequence resource="EMBL-CDS" id="BAC87546"/>
    </conflict>
    <text>Truncated N-terminus.</text>
</comment>
<protein>
    <recommendedName>
        <fullName>Acidic amino acid decarboxylase GADL1</fullName>
    </recommendedName>
    <alternativeName>
        <fullName>Aspartate 1-decarboxylase</fullName>
        <shortName>ADC</shortName>
        <shortName>HuADC</shortName>
        <ecNumber evidence="2">4.1.1.11</ecNumber>
    </alternativeName>
    <alternativeName>
        <fullName>Cysteine sulfinic acid decarboxylase</fullName>
        <shortName>CSADC</shortName>
        <shortName>HuCSADC</shortName>
        <ecNumber evidence="2">4.1.1.29</ecNumber>
    </alternativeName>
    <alternativeName>
        <fullName>Glutamate decarboxylase-like protein 1</fullName>
    </alternativeName>
</protein>
<dbReference type="EC" id="4.1.1.11" evidence="2"/>
<dbReference type="EC" id="4.1.1.29" evidence="2"/>
<dbReference type="EMBL" id="AL832766">
    <property type="status" value="NOT_ANNOTATED_CDS"/>
    <property type="molecule type" value="mRNA"/>
</dbReference>
<dbReference type="EMBL" id="AC095029">
    <property type="status" value="NOT_ANNOTATED_CDS"/>
    <property type="molecule type" value="Genomic_DNA"/>
</dbReference>
<dbReference type="EMBL" id="AC138391">
    <property type="status" value="NOT_ANNOTATED_CDS"/>
    <property type="molecule type" value="Genomic_DNA"/>
</dbReference>
<dbReference type="EMBL" id="AK128643">
    <property type="protein sequence ID" value="BAC87546.1"/>
    <property type="status" value="ALT_INIT"/>
    <property type="molecule type" value="mRNA"/>
</dbReference>
<dbReference type="EMBL" id="BC093701">
    <property type="protein sequence ID" value="AAH93701.1"/>
    <property type="status" value="ALT_INIT"/>
    <property type="molecule type" value="mRNA"/>
</dbReference>
<dbReference type="EMBL" id="BC111986">
    <property type="protein sequence ID" value="AAI11987.1"/>
    <property type="status" value="ALT_INIT"/>
    <property type="molecule type" value="mRNA"/>
</dbReference>
<dbReference type="CCDS" id="CCDS2649.2">
    <molecule id="Q6ZQY3-1"/>
</dbReference>
<dbReference type="RefSeq" id="NP_997242.2">
    <molecule id="Q6ZQY3-1"/>
    <property type="nucleotide sequence ID" value="NM_207359.3"/>
</dbReference>
<dbReference type="SMR" id="Q6ZQY3"/>
<dbReference type="BioGRID" id="130959">
    <property type="interactions" value="9"/>
</dbReference>
<dbReference type="FunCoup" id="Q6ZQY3">
    <property type="interactions" value="592"/>
</dbReference>
<dbReference type="IntAct" id="Q6ZQY3">
    <property type="interactions" value="7"/>
</dbReference>
<dbReference type="STRING" id="9606.ENSP00000282538"/>
<dbReference type="DrugBank" id="DB00114">
    <property type="generic name" value="Pyridoxal phosphate"/>
</dbReference>
<dbReference type="iPTMnet" id="Q6ZQY3"/>
<dbReference type="PhosphoSitePlus" id="Q6ZQY3"/>
<dbReference type="BioMuta" id="GADL1"/>
<dbReference type="DMDM" id="269849753"/>
<dbReference type="jPOST" id="Q6ZQY3"/>
<dbReference type="MassIVE" id="Q6ZQY3"/>
<dbReference type="PaxDb" id="9606-ENSP00000282538"/>
<dbReference type="PeptideAtlas" id="Q6ZQY3"/>
<dbReference type="ProteomicsDB" id="68102">
    <molecule id="Q6ZQY3-1"/>
</dbReference>
<dbReference type="ProteomicsDB" id="68103">
    <molecule id="Q6ZQY3-3"/>
</dbReference>
<dbReference type="Antibodypedia" id="45281">
    <property type="antibodies" value="104 antibodies from 21 providers"/>
</dbReference>
<dbReference type="DNASU" id="339896"/>
<dbReference type="Ensembl" id="ENST00000282538.10">
    <molecule id="Q6ZQY3-1"/>
    <property type="protein sequence ID" value="ENSP00000282538.5"/>
    <property type="gene ID" value="ENSG00000144644.15"/>
</dbReference>
<dbReference type="Ensembl" id="ENST00000454381.3">
    <molecule id="Q6ZQY3-3"/>
    <property type="protein sequence ID" value="ENSP00000427059.1"/>
    <property type="gene ID" value="ENSG00000144644.15"/>
</dbReference>
<dbReference type="GeneID" id="339896"/>
<dbReference type="KEGG" id="hsa:339896"/>
<dbReference type="MANE-Select" id="ENST00000282538.10">
    <property type="protein sequence ID" value="ENSP00000282538.5"/>
    <property type="RefSeq nucleotide sequence ID" value="NM_207359.3"/>
    <property type="RefSeq protein sequence ID" value="NP_997242.2"/>
</dbReference>
<dbReference type="UCSC" id="uc003cep.3">
    <molecule id="Q6ZQY3-1"/>
    <property type="organism name" value="human"/>
</dbReference>
<dbReference type="AGR" id="HGNC:27949"/>
<dbReference type="CTD" id="339896"/>
<dbReference type="DisGeNET" id="339896"/>
<dbReference type="GeneCards" id="GADL1"/>
<dbReference type="HGNC" id="HGNC:27949">
    <property type="gene designation" value="GADL1"/>
</dbReference>
<dbReference type="HPA" id="ENSG00000144644">
    <property type="expression patterns" value="Group enriched (skeletal muscle, tongue)"/>
</dbReference>
<dbReference type="MalaCards" id="GADL1"/>
<dbReference type="MIM" id="615601">
    <property type="type" value="gene"/>
</dbReference>
<dbReference type="neXtProt" id="NX_Q6ZQY3"/>
<dbReference type="OpenTargets" id="ENSG00000144644"/>
<dbReference type="PharmGKB" id="PA134944477"/>
<dbReference type="VEuPathDB" id="HostDB:ENSG00000144644"/>
<dbReference type="eggNOG" id="KOG0629">
    <property type="taxonomic scope" value="Eukaryota"/>
</dbReference>
<dbReference type="GeneTree" id="ENSGT00940000158391"/>
<dbReference type="HOGENOM" id="CLU_011856_0_0_1"/>
<dbReference type="InParanoid" id="Q6ZQY3"/>
<dbReference type="OMA" id="NWQPLMV"/>
<dbReference type="OrthoDB" id="392571at2759"/>
<dbReference type="PAN-GO" id="Q6ZQY3">
    <property type="GO annotations" value="2 GO annotations based on evolutionary models"/>
</dbReference>
<dbReference type="PhylomeDB" id="Q6ZQY3"/>
<dbReference type="TreeFam" id="TF314688"/>
<dbReference type="PathwayCommons" id="Q6ZQY3"/>
<dbReference type="Reactome" id="R-HSA-1614558">
    <property type="pathway name" value="Degradation of cysteine and homocysteine"/>
</dbReference>
<dbReference type="Reactome" id="R-HSA-8963693">
    <property type="pathway name" value="Aspartate and asparagine metabolism"/>
</dbReference>
<dbReference type="SABIO-RK" id="Q6ZQY3"/>
<dbReference type="SignaLink" id="Q6ZQY3"/>
<dbReference type="SIGNOR" id="Q6ZQY3"/>
<dbReference type="BioGRID-ORCS" id="339896">
    <property type="hits" value="5 hits in 1151 CRISPR screens"/>
</dbReference>
<dbReference type="ChiTaRS" id="GADL1">
    <property type="organism name" value="human"/>
</dbReference>
<dbReference type="GenomeRNAi" id="339896"/>
<dbReference type="Pharos" id="Q6ZQY3">
    <property type="development level" value="Tbio"/>
</dbReference>
<dbReference type="PRO" id="PR:Q6ZQY3"/>
<dbReference type="Proteomes" id="UP000005640">
    <property type="component" value="Chromosome 3"/>
</dbReference>
<dbReference type="RNAct" id="Q6ZQY3">
    <property type="molecule type" value="protein"/>
</dbReference>
<dbReference type="Bgee" id="ENSG00000144644">
    <property type="expression patterns" value="Expressed in buccal mucosa cell and 55 other cell types or tissues"/>
</dbReference>
<dbReference type="GO" id="GO:0005737">
    <property type="term" value="C:cytoplasm"/>
    <property type="evidence" value="ECO:0000318"/>
    <property type="project" value="GO_Central"/>
</dbReference>
<dbReference type="GO" id="GO:0005829">
    <property type="term" value="C:cytosol"/>
    <property type="evidence" value="ECO:0000304"/>
    <property type="project" value="Reactome"/>
</dbReference>
<dbReference type="GO" id="GO:0004068">
    <property type="term" value="F:aspartate 1-decarboxylase activity"/>
    <property type="evidence" value="ECO:0007669"/>
    <property type="project" value="UniProtKB-EC"/>
</dbReference>
<dbReference type="GO" id="GO:0016831">
    <property type="term" value="F:carboxy-lyase activity"/>
    <property type="evidence" value="ECO:0000318"/>
    <property type="project" value="GO_Central"/>
</dbReference>
<dbReference type="GO" id="GO:0030170">
    <property type="term" value="F:pyridoxal phosphate binding"/>
    <property type="evidence" value="ECO:0007669"/>
    <property type="project" value="InterPro"/>
</dbReference>
<dbReference type="GO" id="GO:0004782">
    <property type="term" value="F:sulfinoalanine decarboxylase activity"/>
    <property type="evidence" value="ECO:0007669"/>
    <property type="project" value="UniProtKB-EC"/>
</dbReference>
<dbReference type="GO" id="GO:0019752">
    <property type="term" value="P:carboxylic acid metabolic process"/>
    <property type="evidence" value="ECO:0007669"/>
    <property type="project" value="InterPro"/>
</dbReference>
<dbReference type="CDD" id="cd06450">
    <property type="entry name" value="DOPA_deC_like"/>
    <property type="match status" value="1"/>
</dbReference>
<dbReference type="FunFam" id="3.40.640.10:FF:000016">
    <property type="entry name" value="Glutamate decarboxylase like 1"/>
    <property type="match status" value="1"/>
</dbReference>
<dbReference type="Gene3D" id="3.90.1150.170">
    <property type="match status" value="1"/>
</dbReference>
<dbReference type="Gene3D" id="3.40.640.10">
    <property type="entry name" value="Type I PLP-dependent aspartate aminotransferase-like (Major domain)"/>
    <property type="match status" value="1"/>
</dbReference>
<dbReference type="InterPro" id="IPR002129">
    <property type="entry name" value="PyrdxlP-dep_de-COase"/>
</dbReference>
<dbReference type="InterPro" id="IPR015424">
    <property type="entry name" value="PyrdxlP-dep_Trfase"/>
</dbReference>
<dbReference type="InterPro" id="IPR015421">
    <property type="entry name" value="PyrdxlP-dep_Trfase_major"/>
</dbReference>
<dbReference type="InterPro" id="IPR021115">
    <property type="entry name" value="Pyridoxal-P_BS"/>
</dbReference>
<dbReference type="PANTHER" id="PTHR45677:SF1">
    <property type="entry name" value="ACIDIC AMINO ACID DECARBOXYLASE GADL1"/>
    <property type="match status" value="1"/>
</dbReference>
<dbReference type="PANTHER" id="PTHR45677">
    <property type="entry name" value="GLUTAMATE DECARBOXYLASE-RELATED"/>
    <property type="match status" value="1"/>
</dbReference>
<dbReference type="Pfam" id="PF00282">
    <property type="entry name" value="Pyridoxal_deC"/>
    <property type="match status" value="1"/>
</dbReference>
<dbReference type="SUPFAM" id="SSF53383">
    <property type="entry name" value="PLP-dependent transferases"/>
    <property type="match status" value="1"/>
</dbReference>
<dbReference type="PROSITE" id="PS00392">
    <property type="entry name" value="DDC_GAD_HDC_YDC"/>
    <property type="match status" value="1"/>
</dbReference>
<sequence length="521" mass="59246">MSSDSDRQCPVDGDIDQQEMIPSKKNAVLVDGVVLNGPTTDAKAGEKFVEEACRLIMEEVVLKATDVNEKVCEWRPPEQLKQLLDLEMRDSGEPPHKLLELCRDVIHYSVKTNHPRFFNQLYAGLDYYSLVARFMTEALNPSVYTYEVSPVFLLVEEAVLKKMIEFIGWKEGDGIFNPGGSVSNMYAMNLARYKYCPDIKEKGLSGSPRLILFTSAECHYSMKKAASFLGIGTENVCFVETDGRGKMIPEELEKQVWQARKEGAAPFLVCATSGTTVLGAFDPLDEIADICERHSLWLHVDASWGGSALMSRKHRKLLHGIHRADSVAWNPHKMLMAGIQCCALLVKDKSDLLKKCYSAKASYLFQQDKFYDVSYDTGDKSIQCSRRPDAFKFWMTWKALGTLGLEERVNRALALSRYLVDEIKKREGFKLLMEPEYANICFWYIPPSLREMEEGPEFWAKLNLVAPAIKERMMKKGSLMLGYQPHRGKVNFFRQVVISPQVSREDMDFLLDEIDLLGKDM</sequence>
<reference key="1">
    <citation type="journal article" date="2007" name="BMC Genomics">
        <title>The full-ORF clone resource of the German cDNA consortium.</title>
        <authorList>
            <person name="Bechtel S."/>
            <person name="Rosenfelder H."/>
            <person name="Duda A."/>
            <person name="Schmidt C.P."/>
            <person name="Ernst U."/>
            <person name="Wellenreuther R."/>
            <person name="Mehrle A."/>
            <person name="Schuster C."/>
            <person name="Bahr A."/>
            <person name="Bloecker H."/>
            <person name="Heubner D."/>
            <person name="Hoerlein A."/>
            <person name="Michel G."/>
            <person name="Wedler H."/>
            <person name="Koehrer K."/>
            <person name="Ottenwaelder B."/>
            <person name="Poustka A."/>
            <person name="Wiemann S."/>
            <person name="Schupp I."/>
        </authorList>
    </citation>
    <scope>NUCLEOTIDE SEQUENCE [LARGE SCALE MRNA] (ISOFORM 2)</scope>
    <source>
        <tissue>Testis</tissue>
    </source>
</reference>
<reference key="2">
    <citation type="journal article" date="2006" name="Nature">
        <title>The DNA sequence, annotation and analysis of human chromosome 3.</title>
        <authorList>
            <person name="Muzny D.M."/>
            <person name="Scherer S.E."/>
            <person name="Kaul R."/>
            <person name="Wang J."/>
            <person name="Yu J."/>
            <person name="Sudbrak R."/>
            <person name="Buhay C.J."/>
            <person name="Chen R."/>
            <person name="Cree A."/>
            <person name="Ding Y."/>
            <person name="Dugan-Rocha S."/>
            <person name="Gill R."/>
            <person name="Gunaratne P."/>
            <person name="Harris R.A."/>
            <person name="Hawes A.C."/>
            <person name="Hernandez J."/>
            <person name="Hodgson A.V."/>
            <person name="Hume J."/>
            <person name="Jackson A."/>
            <person name="Khan Z.M."/>
            <person name="Kovar-Smith C."/>
            <person name="Lewis L.R."/>
            <person name="Lozado R.J."/>
            <person name="Metzker M.L."/>
            <person name="Milosavljevic A."/>
            <person name="Miner G.R."/>
            <person name="Morgan M.B."/>
            <person name="Nazareth L.V."/>
            <person name="Scott G."/>
            <person name="Sodergren E."/>
            <person name="Song X.-Z."/>
            <person name="Steffen D."/>
            <person name="Wei S."/>
            <person name="Wheeler D.A."/>
            <person name="Wright M.W."/>
            <person name="Worley K.C."/>
            <person name="Yuan Y."/>
            <person name="Zhang Z."/>
            <person name="Adams C.Q."/>
            <person name="Ansari-Lari M.A."/>
            <person name="Ayele M."/>
            <person name="Brown M.J."/>
            <person name="Chen G."/>
            <person name="Chen Z."/>
            <person name="Clendenning J."/>
            <person name="Clerc-Blankenburg K.P."/>
            <person name="Chen R."/>
            <person name="Chen Z."/>
            <person name="Davis C."/>
            <person name="Delgado O."/>
            <person name="Dinh H.H."/>
            <person name="Dong W."/>
            <person name="Draper H."/>
            <person name="Ernst S."/>
            <person name="Fu G."/>
            <person name="Gonzalez-Garay M.L."/>
            <person name="Garcia D.K."/>
            <person name="Gillett W."/>
            <person name="Gu J."/>
            <person name="Hao B."/>
            <person name="Haugen E."/>
            <person name="Havlak P."/>
            <person name="He X."/>
            <person name="Hennig S."/>
            <person name="Hu S."/>
            <person name="Huang W."/>
            <person name="Jackson L.R."/>
            <person name="Jacob L.S."/>
            <person name="Kelly S.H."/>
            <person name="Kube M."/>
            <person name="Levy R."/>
            <person name="Li Z."/>
            <person name="Liu B."/>
            <person name="Liu J."/>
            <person name="Liu W."/>
            <person name="Lu J."/>
            <person name="Maheshwari M."/>
            <person name="Nguyen B.-V."/>
            <person name="Okwuonu G.O."/>
            <person name="Palmeiri A."/>
            <person name="Pasternak S."/>
            <person name="Perez L.M."/>
            <person name="Phelps K.A."/>
            <person name="Plopper F.J."/>
            <person name="Qiang B."/>
            <person name="Raymond C."/>
            <person name="Rodriguez R."/>
            <person name="Saenphimmachak C."/>
            <person name="Santibanez J."/>
            <person name="Shen H."/>
            <person name="Shen Y."/>
            <person name="Subramanian S."/>
            <person name="Tabor P.E."/>
            <person name="Verduzco D."/>
            <person name="Waldron L."/>
            <person name="Wang J."/>
            <person name="Wang J."/>
            <person name="Wang Q."/>
            <person name="Williams G.A."/>
            <person name="Wong G.K.-S."/>
            <person name="Yao Z."/>
            <person name="Zhang J."/>
            <person name="Zhang X."/>
            <person name="Zhao G."/>
            <person name="Zhou J."/>
            <person name="Zhou Y."/>
            <person name="Nelson D."/>
            <person name="Lehrach H."/>
            <person name="Reinhardt R."/>
            <person name="Naylor S.L."/>
            <person name="Yang H."/>
            <person name="Olson M."/>
            <person name="Weinstock G."/>
            <person name="Gibbs R.A."/>
        </authorList>
    </citation>
    <scope>NUCLEOTIDE SEQUENCE [LARGE SCALE GENOMIC DNA]</scope>
</reference>
<reference key="3">
    <citation type="journal article" date="2004" name="Nat. Genet.">
        <title>Complete sequencing and characterization of 21,243 full-length human cDNAs.</title>
        <authorList>
            <person name="Ota T."/>
            <person name="Suzuki Y."/>
            <person name="Nishikawa T."/>
            <person name="Otsuki T."/>
            <person name="Sugiyama T."/>
            <person name="Irie R."/>
            <person name="Wakamatsu A."/>
            <person name="Hayashi K."/>
            <person name="Sato H."/>
            <person name="Nagai K."/>
            <person name="Kimura K."/>
            <person name="Makita H."/>
            <person name="Sekine M."/>
            <person name="Obayashi M."/>
            <person name="Nishi T."/>
            <person name="Shibahara T."/>
            <person name="Tanaka T."/>
            <person name="Ishii S."/>
            <person name="Yamamoto J."/>
            <person name="Saito K."/>
            <person name="Kawai Y."/>
            <person name="Isono Y."/>
            <person name="Nakamura Y."/>
            <person name="Nagahari K."/>
            <person name="Murakami K."/>
            <person name="Yasuda T."/>
            <person name="Iwayanagi T."/>
            <person name="Wagatsuma M."/>
            <person name="Shiratori A."/>
            <person name="Sudo H."/>
            <person name="Hosoiri T."/>
            <person name="Kaku Y."/>
            <person name="Kodaira H."/>
            <person name="Kondo H."/>
            <person name="Sugawara M."/>
            <person name="Takahashi M."/>
            <person name="Kanda K."/>
            <person name="Yokoi T."/>
            <person name="Furuya T."/>
            <person name="Kikkawa E."/>
            <person name="Omura Y."/>
            <person name="Abe K."/>
            <person name="Kamihara K."/>
            <person name="Katsuta N."/>
            <person name="Sato K."/>
            <person name="Tanikawa M."/>
            <person name="Yamazaki M."/>
            <person name="Ninomiya K."/>
            <person name="Ishibashi T."/>
            <person name="Yamashita H."/>
            <person name="Murakawa K."/>
            <person name="Fujimori K."/>
            <person name="Tanai H."/>
            <person name="Kimata M."/>
            <person name="Watanabe M."/>
            <person name="Hiraoka S."/>
            <person name="Chiba Y."/>
            <person name="Ishida S."/>
            <person name="Ono Y."/>
            <person name="Takiguchi S."/>
            <person name="Watanabe S."/>
            <person name="Yosida M."/>
            <person name="Hotuta T."/>
            <person name="Kusano J."/>
            <person name="Kanehori K."/>
            <person name="Takahashi-Fujii A."/>
            <person name="Hara H."/>
            <person name="Tanase T.-O."/>
            <person name="Nomura Y."/>
            <person name="Togiya S."/>
            <person name="Komai F."/>
            <person name="Hara R."/>
            <person name="Takeuchi K."/>
            <person name="Arita M."/>
            <person name="Imose N."/>
            <person name="Musashino K."/>
            <person name="Yuuki H."/>
            <person name="Oshima A."/>
            <person name="Sasaki N."/>
            <person name="Aotsuka S."/>
            <person name="Yoshikawa Y."/>
            <person name="Matsunawa H."/>
            <person name="Ichihara T."/>
            <person name="Shiohata N."/>
            <person name="Sano S."/>
            <person name="Moriya S."/>
            <person name="Momiyama H."/>
            <person name="Satoh N."/>
            <person name="Takami S."/>
            <person name="Terashima Y."/>
            <person name="Suzuki O."/>
            <person name="Nakagawa S."/>
            <person name="Senoh A."/>
            <person name="Mizoguchi H."/>
            <person name="Goto Y."/>
            <person name="Shimizu F."/>
            <person name="Wakebe H."/>
            <person name="Hishigaki H."/>
            <person name="Watanabe T."/>
            <person name="Sugiyama A."/>
            <person name="Takemoto M."/>
            <person name="Kawakami B."/>
            <person name="Yamazaki M."/>
            <person name="Watanabe K."/>
            <person name="Kumagai A."/>
            <person name="Itakura S."/>
            <person name="Fukuzumi Y."/>
            <person name="Fujimori Y."/>
            <person name="Komiyama M."/>
            <person name="Tashiro H."/>
            <person name="Tanigami A."/>
            <person name="Fujiwara T."/>
            <person name="Ono T."/>
            <person name="Yamada K."/>
            <person name="Fujii Y."/>
            <person name="Ozaki K."/>
            <person name="Hirao M."/>
            <person name="Ohmori Y."/>
            <person name="Kawabata A."/>
            <person name="Hikiji T."/>
            <person name="Kobatake N."/>
            <person name="Inagaki H."/>
            <person name="Ikema Y."/>
            <person name="Okamoto S."/>
            <person name="Okitani R."/>
            <person name="Kawakami T."/>
            <person name="Noguchi S."/>
            <person name="Itoh T."/>
            <person name="Shigeta K."/>
            <person name="Senba T."/>
            <person name="Matsumura K."/>
            <person name="Nakajima Y."/>
            <person name="Mizuno T."/>
            <person name="Morinaga M."/>
            <person name="Sasaki M."/>
            <person name="Togashi T."/>
            <person name="Oyama M."/>
            <person name="Hata H."/>
            <person name="Watanabe M."/>
            <person name="Komatsu T."/>
            <person name="Mizushima-Sugano J."/>
            <person name="Satoh T."/>
            <person name="Shirai Y."/>
            <person name="Takahashi Y."/>
            <person name="Nakagawa K."/>
            <person name="Okumura K."/>
            <person name="Nagase T."/>
            <person name="Nomura N."/>
            <person name="Kikuchi H."/>
            <person name="Masuho Y."/>
            <person name="Yamashita R."/>
            <person name="Nakai K."/>
            <person name="Yada T."/>
            <person name="Nakamura Y."/>
            <person name="Ohara O."/>
            <person name="Isogai T."/>
            <person name="Sugano S."/>
        </authorList>
    </citation>
    <scope>NUCLEOTIDE SEQUENCE [LARGE SCALE MRNA] OF 176-521 (ISOFORM 1)</scope>
    <source>
        <tissue>Trachea</tissue>
    </source>
</reference>
<reference key="4">
    <citation type="journal article" date="2004" name="Genome Res.">
        <title>The status, quality, and expansion of the NIH full-length cDNA project: the Mammalian Gene Collection (MGC).</title>
        <authorList>
            <consortium name="The MGC Project Team"/>
        </authorList>
    </citation>
    <scope>NUCLEOTIDE SEQUENCE [LARGE SCALE MRNA] OF 178-521 (ISOFORM 1)</scope>
    <source>
        <tissue>Cerebellum</tissue>
    </source>
</reference>
<reference key="5">
    <citation type="journal article" date="2012" name="J. Biol. Chem.">
        <title>Role of glutamate decarboxylase-like protein 1 (GADL1) in taurine biosynthesis.</title>
        <authorList>
            <person name="Liu P."/>
            <person name="Ge X."/>
            <person name="Ding H."/>
            <person name="Jiang H."/>
            <person name="Christensen B.M."/>
            <person name="Li J."/>
        </authorList>
    </citation>
    <scope>FUNCTION</scope>
    <scope>CATALYTIC ACTIVITY</scope>
    <scope>SUBSTRATE SPECIFICITY</scope>
    <scope>COFACTOR</scope>
    <scope>BIOPHYSICOCHEMICAL PROPERTIES</scope>
</reference>
<reference key="6">
    <citation type="journal article" date="2015" name="Neurochem. Int.">
        <title>Mammalian CSAD and GADL1 have distinct biochemical properties and patterns of brain expression.</title>
        <authorList>
            <person name="Winge I."/>
            <person name="Teigen K."/>
            <person name="Fossbakk A."/>
            <person name="Mahootchi E."/>
            <person name="Kleppe R."/>
            <person name="Skoeldberg F."/>
            <person name="Kaempe O."/>
            <person name="Haavik J."/>
        </authorList>
    </citation>
    <scope>TISSUE SPECIFICITY</scope>
</reference>
<feature type="chain" id="PRO_0000312224" description="Acidic amino acid decarboxylase GADL1">
    <location>
        <begin position="1"/>
        <end position="521"/>
    </location>
</feature>
<feature type="modified residue" description="N6-(pyridoxal phosphate)lysine" evidence="1">
    <location>
        <position position="333"/>
    </location>
</feature>
<feature type="splice variant" id="VSP_036227" description="In isoform 2." evidence="4">
    <location>
        <begin position="419"/>
        <end position="521"/>
    </location>
</feature>
<feature type="sequence conflict" description="In Ref. 1; AL832766." evidence="5" ref="1">
    <original>D</original>
    <variation>G</variation>
    <location>
        <position position="66"/>
    </location>
</feature>
<keyword id="KW-0025">Alternative splicing</keyword>
<keyword id="KW-0210">Decarboxylase</keyword>
<keyword id="KW-0456">Lyase</keyword>
<keyword id="KW-1267">Proteomics identification</keyword>
<keyword id="KW-0663">Pyridoxal phosphate</keyword>
<keyword id="KW-1185">Reference proteome</keyword>
<gene>
    <name type="primary">GADL1</name>
</gene>
<proteinExistence type="evidence at protein level"/>
<accession>Q6ZQY3</accession>
<name>GADL1_HUMAN</name>
<evidence type="ECO:0000250" key="1">
    <source>
        <dbReference type="UniProtKB" id="Q80WP8"/>
    </source>
</evidence>
<evidence type="ECO:0000269" key="2">
    <source>
    </source>
</evidence>
<evidence type="ECO:0000269" key="3">
    <source>
    </source>
</evidence>
<evidence type="ECO:0000303" key="4">
    <source>
    </source>
</evidence>
<evidence type="ECO:0000305" key="5"/>
<organism>
    <name type="scientific">Homo sapiens</name>
    <name type="common">Human</name>
    <dbReference type="NCBI Taxonomy" id="9606"/>
    <lineage>
        <taxon>Eukaryota</taxon>
        <taxon>Metazoa</taxon>
        <taxon>Chordata</taxon>
        <taxon>Craniata</taxon>
        <taxon>Vertebrata</taxon>
        <taxon>Euteleostomi</taxon>
        <taxon>Mammalia</taxon>
        <taxon>Eutheria</taxon>
        <taxon>Euarchontoglires</taxon>
        <taxon>Primates</taxon>
        <taxon>Haplorrhini</taxon>
        <taxon>Catarrhini</taxon>
        <taxon>Hominidae</taxon>
        <taxon>Homo</taxon>
    </lineage>
</organism>